<proteinExistence type="evidence at protein level"/>
<sequence length="443" mass="47453">MATAASNPYLASSSILSSGSIVHSDSGGGMQQGSAAVTSVSGGYRGDPTVKMVQSDFMQGAMAASNGGHMLSHAHQWVTSLPHAAAAAAAAAVAAAEAGSPWSSSPVGMTGSPQQQDVKNNSGRDDLHSGTALHHRAPHLGPHQTHAGAWGSTTAAHIPSLTGSQQQQQSLIYSQPGGFTVNGMLSPPGSQSLVHPGLVRGDTPELDHSSHHHHHHHQHQHHQQAHHGVNSHDPHSDEDTPTSDDLEHFAKQFKQRRIKLGFTQADVGLALGTLYGNVFSQTTICRFEALQLSFKNMCKLKPLLNKWLEEADSSTGSPTSIDKIAAQGRKRKKRTSIEVSVKGALESHFLKCPKPSAQEITSLADNLQLEKEVVRVWFCNRRQKEKRMTPPGVPQTPEDVYSQVGNGHFLVDYLKDASLTGPSEPGDQRVTTTSSFHQVILAH</sequence>
<dbReference type="EMBL" id="D13045">
    <property type="protein sequence ID" value="BAA02377.1"/>
    <property type="molecule type" value="mRNA"/>
</dbReference>
<dbReference type="EMBL" id="Y07907">
    <property type="protein sequence ID" value="CAA69215.1"/>
    <property type="molecule type" value="mRNA"/>
</dbReference>
<dbReference type="EMBL" id="Y07907">
    <property type="protein sequence ID" value="CAA69214.1"/>
    <property type="molecule type" value="mRNA"/>
</dbReference>
<dbReference type="EMBL" id="BC056320">
    <property type="protein sequence ID" value="AAH56320.1"/>
    <property type="molecule type" value="mRNA"/>
</dbReference>
<dbReference type="EMBL" id="BC056549">
    <property type="protein sequence ID" value="AAH56549.1"/>
    <property type="molecule type" value="mRNA"/>
</dbReference>
<dbReference type="EMBL" id="BC163489">
    <property type="protein sequence ID" value="AAI63489.1"/>
    <property type="molecule type" value="mRNA"/>
</dbReference>
<dbReference type="PIR" id="JH0710">
    <property type="entry name" value="JH0710"/>
</dbReference>
<dbReference type="RefSeq" id="NP_571177.2">
    <molecule id="P79745-2"/>
    <property type="nucleotide sequence ID" value="NM_131102.3"/>
</dbReference>
<dbReference type="RefSeq" id="NP_958855.2">
    <molecule id="P79745-1"/>
    <property type="nucleotide sequence ID" value="NM_201447.2"/>
</dbReference>
<dbReference type="SMR" id="P79745"/>
<dbReference type="FunCoup" id="P79745">
    <property type="interactions" value="581"/>
</dbReference>
<dbReference type="STRING" id="7955.ENSDARP00000124688"/>
<dbReference type="iPTMnet" id="P79745"/>
<dbReference type="PaxDb" id="7955-ENSDARP00000124688"/>
<dbReference type="DNASU" id="30321"/>
<dbReference type="Ensembl" id="ENSDART00000149949">
    <molecule id="P79745-1"/>
    <property type="protein sequence ID" value="ENSDARP00000124688"/>
    <property type="gene ID" value="ENSDARG00000095896"/>
</dbReference>
<dbReference type="GeneID" id="30321"/>
<dbReference type="KEGG" id="dre:30321"/>
<dbReference type="AGR" id="ZFIN:ZDB-GENE-980526-140"/>
<dbReference type="CTD" id="30321"/>
<dbReference type="ZFIN" id="ZDB-GENE-980526-140">
    <property type="gene designation" value="pou3f3b"/>
</dbReference>
<dbReference type="eggNOG" id="KOG3802">
    <property type="taxonomic scope" value="Eukaryota"/>
</dbReference>
<dbReference type="HOGENOM" id="CLU_013065_1_2_1"/>
<dbReference type="InParanoid" id="P79745"/>
<dbReference type="OMA" id="CKRITAK"/>
<dbReference type="OrthoDB" id="6358449at2759"/>
<dbReference type="PhylomeDB" id="P79745"/>
<dbReference type="TreeFam" id="TF316413"/>
<dbReference type="PRO" id="PR:P79745"/>
<dbReference type="Proteomes" id="UP000000437">
    <property type="component" value="Chromosome 6"/>
</dbReference>
<dbReference type="Bgee" id="ENSDARG00000095896">
    <property type="expression patterns" value="Expressed in brain and 35 other cell types or tissues"/>
</dbReference>
<dbReference type="GO" id="GO:0005634">
    <property type="term" value="C:nucleus"/>
    <property type="evidence" value="ECO:0007669"/>
    <property type="project" value="UniProtKB-SubCell"/>
</dbReference>
<dbReference type="GO" id="GO:0000981">
    <property type="term" value="F:DNA-binding transcription factor activity, RNA polymerase II-specific"/>
    <property type="evidence" value="ECO:0000318"/>
    <property type="project" value="GO_Central"/>
</dbReference>
<dbReference type="GO" id="GO:0000978">
    <property type="term" value="F:RNA polymerase II cis-regulatory region sequence-specific DNA binding"/>
    <property type="evidence" value="ECO:0000318"/>
    <property type="project" value="GO_Central"/>
</dbReference>
<dbReference type="GO" id="GO:0007420">
    <property type="term" value="P:brain development"/>
    <property type="evidence" value="ECO:0007669"/>
    <property type="project" value="InterPro"/>
</dbReference>
<dbReference type="GO" id="GO:0006357">
    <property type="term" value="P:regulation of transcription by RNA polymerase II"/>
    <property type="evidence" value="ECO:0000318"/>
    <property type="project" value="GO_Central"/>
</dbReference>
<dbReference type="CDD" id="cd00086">
    <property type="entry name" value="homeodomain"/>
    <property type="match status" value="1"/>
</dbReference>
<dbReference type="FunFam" id="1.10.10.60:FF:000005">
    <property type="entry name" value="POU domain protein"/>
    <property type="match status" value="1"/>
</dbReference>
<dbReference type="FunFam" id="1.10.260.40:FF:000001">
    <property type="entry name" value="POU domain protein"/>
    <property type="match status" value="1"/>
</dbReference>
<dbReference type="Gene3D" id="1.10.10.60">
    <property type="entry name" value="Homeodomain-like"/>
    <property type="match status" value="1"/>
</dbReference>
<dbReference type="Gene3D" id="1.10.260.40">
    <property type="entry name" value="lambda repressor-like DNA-binding domains"/>
    <property type="match status" value="1"/>
</dbReference>
<dbReference type="InterPro" id="IPR001356">
    <property type="entry name" value="HD"/>
</dbReference>
<dbReference type="InterPro" id="IPR017970">
    <property type="entry name" value="Homeobox_CS"/>
</dbReference>
<dbReference type="InterPro" id="IPR009057">
    <property type="entry name" value="Homeodomain-like_sf"/>
</dbReference>
<dbReference type="InterPro" id="IPR010982">
    <property type="entry name" value="Lambda_DNA-bd_dom_sf"/>
</dbReference>
<dbReference type="InterPro" id="IPR013847">
    <property type="entry name" value="POU"/>
</dbReference>
<dbReference type="InterPro" id="IPR000327">
    <property type="entry name" value="POU_dom"/>
</dbReference>
<dbReference type="InterPro" id="IPR050255">
    <property type="entry name" value="POU_domain_TF"/>
</dbReference>
<dbReference type="InterPro" id="IPR016362">
    <property type="entry name" value="TF_POU_3"/>
</dbReference>
<dbReference type="PANTHER" id="PTHR11636">
    <property type="entry name" value="POU DOMAIN"/>
    <property type="match status" value="1"/>
</dbReference>
<dbReference type="PANTHER" id="PTHR11636:SF125">
    <property type="entry name" value="POU DOMAIN, CLASS 3, TRANSCRIPTION FACTOR 3"/>
    <property type="match status" value="1"/>
</dbReference>
<dbReference type="Pfam" id="PF00046">
    <property type="entry name" value="Homeodomain"/>
    <property type="match status" value="1"/>
</dbReference>
<dbReference type="Pfam" id="PF00157">
    <property type="entry name" value="Pou"/>
    <property type="match status" value="1"/>
</dbReference>
<dbReference type="PIRSF" id="PIRSF002629">
    <property type="entry name" value="Transcription_factor_POU"/>
    <property type="match status" value="1"/>
</dbReference>
<dbReference type="PRINTS" id="PR00028">
    <property type="entry name" value="POUDOMAIN"/>
</dbReference>
<dbReference type="SMART" id="SM00389">
    <property type="entry name" value="HOX"/>
    <property type="match status" value="1"/>
</dbReference>
<dbReference type="SMART" id="SM00352">
    <property type="entry name" value="POU"/>
    <property type="match status" value="1"/>
</dbReference>
<dbReference type="SUPFAM" id="SSF46689">
    <property type="entry name" value="Homeodomain-like"/>
    <property type="match status" value="1"/>
</dbReference>
<dbReference type="SUPFAM" id="SSF47413">
    <property type="entry name" value="lambda repressor-like DNA-binding domains"/>
    <property type="match status" value="1"/>
</dbReference>
<dbReference type="PROSITE" id="PS00027">
    <property type="entry name" value="HOMEOBOX_1"/>
    <property type="match status" value="1"/>
</dbReference>
<dbReference type="PROSITE" id="PS50071">
    <property type="entry name" value="HOMEOBOX_2"/>
    <property type="match status" value="1"/>
</dbReference>
<dbReference type="PROSITE" id="PS00035">
    <property type="entry name" value="POU_1"/>
    <property type="match status" value="1"/>
</dbReference>
<dbReference type="PROSITE" id="PS00465">
    <property type="entry name" value="POU_2"/>
    <property type="match status" value="1"/>
</dbReference>
<dbReference type="PROSITE" id="PS51179">
    <property type="entry name" value="POU_3"/>
    <property type="match status" value="1"/>
</dbReference>
<organism>
    <name type="scientific">Danio rerio</name>
    <name type="common">Zebrafish</name>
    <name type="synonym">Brachydanio rerio</name>
    <dbReference type="NCBI Taxonomy" id="7955"/>
    <lineage>
        <taxon>Eukaryota</taxon>
        <taxon>Metazoa</taxon>
        <taxon>Chordata</taxon>
        <taxon>Craniata</taxon>
        <taxon>Vertebrata</taxon>
        <taxon>Euteleostomi</taxon>
        <taxon>Actinopterygii</taxon>
        <taxon>Neopterygii</taxon>
        <taxon>Teleostei</taxon>
        <taxon>Ostariophysi</taxon>
        <taxon>Cypriniformes</taxon>
        <taxon>Danionidae</taxon>
        <taxon>Danioninae</taxon>
        <taxon>Danio</taxon>
    </lineage>
</organism>
<protein>
    <recommendedName>
        <fullName>POU domain, class 3, transcription factor 3-B</fullName>
    </recommendedName>
    <alternativeName>
        <fullName>Brain-specific homeobox/POU domain protein 1.0</fullName>
        <shortName>Brain-1.0</shortName>
        <shortName>zfBrn-1.0</shortName>
    </alternativeName>
    <alternativeName>
        <fullName>POU domain protein 1</fullName>
        <shortName>ZFPOU1</shortName>
    </alternativeName>
    <alternativeName>
        <fullName>POU domain protein 23</fullName>
        <shortName>ZP-23</shortName>
    </alternativeName>
</protein>
<keyword id="KW-0025">Alternative splicing</keyword>
<keyword id="KW-0217">Developmental protein</keyword>
<keyword id="KW-0238">DNA-binding</keyword>
<keyword id="KW-0371">Homeobox</keyword>
<keyword id="KW-0539">Nucleus</keyword>
<keyword id="KW-0597">Phosphoprotein</keyword>
<keyword id="KW-1185">Reference proteome</keyword>
<keyword id="KW-0804">Transcription</keyword>
<keyword id="KW-0805">Transcription regulation</keyword>
<evidence type="ECO:0000255" key="1">
    <source>
        <dbReference type="PROSITE-ProRule" id="PRU00108"/>
    </source>
</evidence>
<evidence type="ECO:0000255" key="2">
    <source>
        <dbReference type="PROSITE-ProRule" id="PRU00530"/>
    </source>
</evidence>
<evidence type="ECO:0000256" key="3">
    <source>
        <dbReference type="SAM" id="MobiDB-lite"/>
    </source>
</evidence>
<evidence type="ECO:0000269" key="4">
    <source>
    </source>
</evidence>
<evidence type="ECO:0000269" key="5">
    <source>
    </source>
</evidence>
<evidence type="ECO:0000269" key="6">
    <source>
    </source>
</evidence>
<evidence type="ECO:0000269" key="7">
    <source>
    </source>
</evidence>
<evidence type="ECO:0000303" key="8">
    <source>
    </source>
</evidence>
<evidence type="ECO:0000303" key="9">
    <source>
    </source>
</evidence>
<evidence type="ECO:0000303" key="10">
    <source>
    </source>
</evidence>
<evidence type="ECO:0000303" key="11">
    <source ref="3"/>
</evidence>
<evidence type="ECO:0000305" key="12"/>
<accession>P79745</accession>
<accession>B3DJH8</accession>
<accession>P31366</accession>
<accession>P79744</accession>
<accession>Q6PHH6</accession>
<name>P3F3B_DANRE</name>
<reference key="1">
    <citation type="journal article" date="1992" name="Biochem. Biophys. Res. Commun.">
        <title>A POU-domain gene of zebrafish, ZFPOU1, specifically expressed in the developing neural tissues.</title>
        <authorList>
            <person name="Matsuzaki T."/>
            <person name="Amanuma H."/>
            <person name="Takeda H."/>
        </authorList>
    </citation>
    <scope>NUCLEOTIDE SEQUENCE [MRNA] (ISOFORM SHORT)</scope>
    <scope>TISSUE SPECIFICITY</scope>
    <scope>DEVELOPMENTAL STAGE</scope>
    <source>
        <tissue>Neurula</tissue>
    </source>
</reference>
<reference key="2">
    <citation type="journal article" date="1996" name="Nucleic Acids Res.">
        <title>Class III POU genes of zebrafish are predominantly expressed in the central nervous system.</title>
        <authorList>
            <person name="Spaniol P."/>
            <person name="Bornmann C."/>
            <person name="Hauptmann G."/>
            <person name="Gerster T."/>
        </authorList>
    </citation>
    <scope>NUCLEOTIDE SEQUENCE [MRNA] (ISOFORMS LONG AND SHORT)</scope>
    <scope>TISSUE SPECIFICITY</scope>
    <scope>DEVELOPMENTAL STAGE</scope>
    <source>
        <tissue>Neurula</tissue>
    </source>
</reference>
<reference key="3">
    <citation type="submission" date="2008-04" db="EMBL/GenBank/DDBJ databases">
        <authorList>
            <consortium name="NIH - Zebrafish Gene Collection (ZGC) project"/>
        </authorList>
    </citation>
    <scope>NUCLEOTIDE SEQUENCE [LARGE SCALE MRNA] (ISOFORMS LONG AND SHORT)</scope>
    <source>
        <tissue>Embryo</tissue>
        <tissue>Kidney</tissue>
    </source>
</reference>
<reference key="4">
    <citation type="journal article" date="1996" name="Biochem. Biophys. Res. Commun.">
        <title>Developmental expression of class III and IV POU domain genes in the zebrafish.</title>
        <authorList>
            <person name="Sampath K."/>
            <person name="Stuart G.W."/>
        </authorList>
    </citation>
    <scope>NUCLEOTIDE SEQUENCE [MRNA] OF 262-374 (ISOFORM SHORT)</scope>
    <scope>TISSUE SPECIFICITY</scope>
    <scope>DEVELOPMENTAL STAGE</scope>
    <source>
        <tissue>Pharyngula</tissue>
    </source>
</reference>
<reference key="5">
    <citation type="journal article" date="2008" name="J. Proteome Res.">
        <title>Online automated in vivo zebrafish phosphoproteomics: from large-scale analysis down to a single embryo.</title>
        <authorList>
            <person name="Lemeer S."/>
            <person name="Pinkse M.W.H."/>
            <person name="Mohammed S."/>
            <person name="van Breukelen B."/>
            <person name="den Hertog J."/>
            <person name="Slijper M."/>
            <person name="Heck A.J.R."/>
        </authorList>
    </citation>
    <scope>PHOSPHORYLATION [LARGE SCALE ANALYSIS] AT SER-317</scope>
    <scope>IDENTIFICATION BY MASS SPECTROMETRY</scope>
    <source>
        <tissue>Embryo</tissue>
    </source>
</reference>
<feature type="chain" id="PRO_0000100771" description="POU domain, class 3, transcription factor 3-B">
    <location>
        <begin position="1"/>
        <end position="443"/>
    </location>
</feature>
<feature type="domain" description="POU-specific" evidence="2">
    <location>
        <begin position="238"/>
        <end position="312"/>
    </location>
</feature>
<feature type="DNA-binding region" description="Homeobox" evidence="1">
    <location>
        <begin position="330"/>
        <end position="389"/>
    </location>
</feature>
<feature type="region of interest" description="Disordered" evidence="3">
    <location>
        <begin position="21"/>
        <end position="40"/>
    </location>
</feature>
<feature type="region of interest" description="Disordered" evidence="3">
    <location>
        <begin position="100"/>
        <end position="150"/>
    </location>
</feature>
<feature type="region of interest" description="Disordered" evidence="3">
    <location>
        <begin position="182"/>
        <end position="244"/>
    </location>
</feature>
<feature type="compositionally biased region" description="Polar residues" evidence="3">
    <location>
        <begin position="101"/>
        <end position="121"/>
    </location>
</feature>
<feature type="compositionally biased region" description="Basic residues" evidence="3">
    <location>
        <begin position="210"/>
        <end position="225"/>
    </location>
</feature>
<feature type="modified residue" description="Phosphoserine" evidence="5">
    <location>
        <position position="317"/>
    </location>
</feature>
<feature type="splice variant" id="VSP_002341" description="In isoform Short." evidence="8 9 10 11">
    <original>GHFLVDYLKDASLTGPSEPGDQRVTTTSSFHQVILAH</original>
    <variation>VSADTPPPSMDCKRMFSET</variation>
    <location>
        <begin position="407"/>
        <end position="443"/>
    </location>
</feature>
<feature type="sequence conflict" description="In Ref. 1; BAA02377." evidence="12" ref="1">
    <original>M</original>
    <variation>I</variation>
    <location>
        <position position="109"/>
    </location>
</feature>
<feature type="sequence conflict" description="In Ref. 3; AAH56549/AAI63489." evidence="12" ref="3">
    <original>Q</original>
    <variation>QQ</variation>
    <location>
        <position position="116"/>
    </location>
</feature>
<feature type="sequence conflict" description="In Ref. 1; BAA02377." evidence="12" ref="1">
    <original>H</original>
    <variation>N</variation>
    <location>
        <position position="135"/>
    </location>
</feature>
<feature type="sequence conflict" description="In Ref. 1; BAA02377." evidence="12" ref="1">
    <original>H</original>
    <variation>Y</variation>
    <location>
        <position position="146"/>
    </location>
</feature>
<feature type="sequence conflict" description="In Ref. 1; BAA02377." evidence="12" ref="1">
    <original>S</original>
    <variation>F</variation>
    <location>
        <position position="170"/>
    </location>
</feature>
<feature type="sequence conflict" description="In Ref. 1; BAA02377." evidence="12" ref="1">
    <original>SQ</original>
    <variation>FA</variation>
    <location>
        <begin position="174"/>
        <end position="175"/>
    </location>
</feature>
<feature type="sequence conflict" description="In Ref. 1; BAA02377." evidence="12" ref="1">
    <original>L</original>
    <variation>H</variation>
    <location>
        <position position="185"/>
    </location>
</feature>
<feature type="sequence conflict" description="In Ref. 1; BAA02377." evidence="12" ref="1">
    <original>T</original>
    <variation>K</variation>
    <location>
        <position position="263"/>
    </location>
</feature>
<comment type="function">
    <text>Transcription factor that may play important roles in patterning the embryonic brain.</text>
</comment>
<comment type="subcellular location">
    <subcellularLocation>
        <location>Nucleus</location>
    </subcellularLocation>
</comment>
<comment type="alternative products">
    <event type="alternative splicing"/>
    <isoform>
        <id>P79745-1</id>
        <name>Long</name>
        <sequence type="displayed"/>
    </isoform>
    <isoform>
        <id>P79745-2</id>
        <name>Short</name>
        <sequence type="described" ref="VSP_002341"/>
    </isoform>
</comment>
<comment type="tissue specificity">
    <text evidence="4 6 7">Predominantly expressed in the central nervous system.</text>
</comment>
<comment type="developmental stage">
    <text evidence="4 6 7">First expressed at early neurula stage (9-12 hours). Expression then increases greatly at the 16-somite stage, reached the maximum level at 36 hr of development, and thereafter decreased. Only expressed in adults in the brain.</text>
</comment>
<comment type="similarity">
    <text evidence="12">Belongs to the POU transcription factor family. Class-3 subfamily.</text>
</comment>
<gene>
    <name type="primary">pou3f3b</name>
    <name type="synonym">brn-1.0</name>
    <name type="synonym">pou1</name>
    <name type="synonym">pou23</name>
    <name type="synonym">zp23</name>
    <name type="synonym">zp23pou</name>
</gene>